<reference key="1">
    <citation type="journal article" date="1999" name="Nature">
        <title>Sequence and analysis of chromosome 2 of the plant Arabidopsis thaliana.</title>
        <authorList>
            <person name="Lin X."/>
            <person name="Kaul S."/>
            <person name="Rounsley S.D."/>
            <person name="Shea T.P."/>
            <person name="Benito M.-I."/>
            <person name="Town C.D."/>
            <person name="Fujii C.Y."/>
            <person name="Mason T.M."/>
            <person name="Bowman C.L."/>
            <person name="Barnstead M.E."/>
            <person name="Feldblyum T.V."/>
            <person name="Buell C.R."/>
            <person name="Ketchum K.A."/>
            <person name="Lee J.J."/>
            <person name="Ronning C.M."/>
            <person name="Koo H.L."/>
            <person name="Moffat K.S."/>
            <person name="Cronin L.A."/>
            <person name="Shen M."/>
            <person name="Pai G."/>
            <person name="Van Aken S."/>
            <person name="Umayam L."/>
            <person name="Tallon L.J."/>
            <person name="Gill J.E."/>
            <person name="Adams M.D."/>
            <person name="Carrera A.J."/>
            <person name="Creasy T.H."/>
            <person name="Goodman H.M."/>
            <person name="Somerville C.R."/>
            <person name="Copenhaver G.P."/>
            <person name="Preuss D."/>
            <person name="Nierman W.C."/>
            <person name="White O."/>
            <person name="Eisen J.A."/>
            <person name="Salzberg S.L."/>
            <person name="Fraser C.M."/>
            <person name="Venter J.C."/>
        </authorList>
    </citation>
    <scope>NUCLEOTIDE SEQUENCE [LARGE SCALE GENOMIC DNA]</scope>
    <source>
        <strain>cv. Columbia</strain>
    </source>
</reference>
<reference key="2">
    <citation type="journal article" date="2017" name="Plant J.">
        <title>Araport11: a complete reannotation of the Arabidopsis thaliana reference genome.</title>
        <authorList>
            <person name="Cheng C.Y."/>
            <person name="Krishnakumar V."/>
            <person name="Chan A.P."/>
            <person name="Thibaud-Nissen F."/>
            <person name="Schobel S."/>
            <person name="Town C.D."/>
        </authorList>
    </citation>
    <scope>GENOME REANNOTATION</scope>
    <source>
        <strain>cv. Columbia</strain>
    </source>
</reference>
<reference key="3">
    <citation type="journal article" date="2005" name="Plant Physiol.">
        <title>Genome organization of more than 300 defensin-like genes in Arabidopsis.</title>
        <authorList>
            <person name="Silverstein K.A.T."/>
            <person name="Graham M.A."/>
            <person name="Paape T.D."/>
            <person name="VandenBosch K.A."/>
        </authorList>
    </citation>
    <scope>NUCLEOTIDE SEQUENCE [MRNA] OF 17-74</scope>
    <scope>GENE FAMILY</scope>
</reference>
<accession>Q4VNZ8</accession>
<sequence>MNITKSYVVIFFLVMLTNSLSNSDILVSSVIETSKYDVCFIPCTRRYEDRECNDDCLAKDFNDGGCVDGRCCCKY</sequence>
<name>DEF59_ARATH</name>
<dbReference type="EMBL" id="AC007167">
    <property type="status" value="NOT_ANNOTATED_CDS"/>
    <property type="molecule type" value="Genomic_DNA"/>
</dbReference>
<dbReference type="EMBL" id="CP002685">
    <property type="protein sequence ID" value="AEC05770.1"/>
    <property type="molecule type" value="Genomic_DNA"/>
</dbReference>
<dbReference type="EMBL" id="AY803264">
    <property type="protein sequence ID" value="AAX39305.1"/>
    <property type="molecule type" value="mRNA"/>
</dbReference>
<dbReference type="RefSeq" id="NP_001031310.1">
    <property type="nucleotide sequence ID" value="NM_001036233.2"/>
</dbReference>
<dbReference type="SMR" id="Q4VNZ8"/>
<dbReference type="PaxDb" id="3702-AT2G03933.1"/>
<dbReference type="ProteomicsDB" id="224072"/>
<dbReference type="EnsemblPlants" id="AT2G03933.1">
    <property type="protein sequence ID" value="AT2G03933.1"/>
    <property type="gene ID" value="AT2G03933"/>
</dbReference>
<dbReference type="GeneID" id="3768143"/>
<dbReference type="Gramene" id="AT2G03933.1">
    <property type="protein sequence ID" value="AT2G03933.1"/>
    <property type="gene ID" value="AT2G03933"/>
</dbReference>
<dbReference type="KEGG" id="ath:AT2G03933"/>
<dbReference type="Araport" id="AT2G03933"/>
<dbReference type="TAIR" id="AT2G03933"/>
<dbReference type="HOGENOM" id="CLU_165205_2_0_1"/>
<dbReference type="InParanoid" id="Q4VNZ8"/>
<dbReference type="PhylomeDB" id="Q4VNZ8"/>
<dbReference type="PRO" id="PR:Q4VNZ8"/>
<dbReference type="Proteomes" id="UP000006548">
    <property type="component" value="Chromosome 2"/>
</dbReference>
<dbReference type="ExpressionAtlas" id="Q4VNZ8">
    <property type="expression patterns" value="baseline"/>
</dbReference>
<dbReference type="GO" id="GO:0005576">
    <property type="term" value="C:extracellular region"/>
    <property type="evidence" value="ECO:0007669"/>
    <property type="project" value="UniProtKB-SubCell"/>
</dbReference>
<dbReference type="GO" id="GO:0009506">
    <property type="term" value="C:plasmodesma"/>
    <property type="evidence" value="ECO:0007005"/>
    <property type="project" value="TAIR"/>
</dbReference>
<dbReference type="GO" id="GO:0050832">
    <property type="term" value="P:defense response to fungus"/>
    <property type="evidence" value="ECO:0007669"/>
    <property type="project" value="UniProtKB-KW"/>
</dbReference>
<dbReference type="GO" id="GO:0031640">
    <property type="term" value="P:killing of cells of another organism"/>
    <property type="evidence" value="ECO:0007669"/>
    <property type="project" value="UniProtKB-KW"/>
</dbReference>
<dbReference type="InterPro" id="IPR056373">
    <property type="entry name" value="Defensin-like_dom"/>
</dbReference>
<dbReference type="Pfam" id="PF24552">
    <property type="entry name" value="Defensin"/>
    <property type="match status" value="1"/>
</dbReference>
<comment type="subcellular location">
    <subcellularLocation>
        <location evidence="1">Secreted</location>
    </subcellularLocation>
</comment>
<comment type="similarity">
    <text evidence="3">Belongs to the DEFL family.</text>
</comment>
<evidence type="ECO:0000250" key="1"/>
<evidence type="ECO:0000255" key="2"/>
<evidence type="ECO:0000305" key="3"/>
<proteinExistence type="inferred from homology"/>
<protein>
    <recommendedName>
        <fullName>Defensin-like protein 59</fullName>
    </recommendedName>
</protein>
<feature type="signal peptide" evidence="2">
    <location>
        <begin position="1"/>
        <end position="19"/>
    </location>
</feature>
<feature type="chain" id="PRO_0000379639" description="Defensin-like protein 59">
    <location>
        <begin position="20"/>
        <end position="75"/>
    </location>
</feature>
<feature type="disulfide bond" evidence="1">
    <location>
        <begin position="39"/>
        <end position="73"/>
    </location>
</feature>
<feature type="disulfide bond" evidence="1">
    <location>
        <begin position="43"/>
        <end position="66"/>
    </location>
</feature>
<feature type="disulfide bond" evidence="1">
    <location>
        <begin position="52"/>
        <end position="71"/>
    </location>
</feature>
<feature type="disulfide bond" evidence="1">
    <location>
        <begin position="56"/>
        <end position="72"/>
    </location>
</feature>
<gene>
    <name type="ordered locus">At2g03933</name>
    <name type="ORF">F3C11</name>
</gene>
<organism>
    <name type="scientific">Arabidopsis thaliana</name>
    <name type="common">Mouse-ear cress</name>
    <dbReference type="NCBI Taxonomy" id="3702"/>
    <lineage>
        <taxon>Eukaryota</taxon>
        <taxon>Viridiplantae</taxon>
        <taxon>Streptophyta</taxon>
        <taxon>Embryophyta</taxon>
        <taxon>Tracheophyta</taxon>
        <taxon>Spermatophyta</taxon>
        <taxon>Magnoliopsida</taxon>
        <taxon>eudicotyledons</taxon>
        <taxon>Gunneridae</taxon>
        <taxon>Pentapetalae</taxon>
        <taxon>rosids</taxon>
        <taxon>malvids</taxon>
        <taxon>Brassicales</taxon>
        <taxon>Brassicaceae</taxon>
        <taxon>Camelineae</taxon>
        <taxon>Arabidopsis</taxon>
    </lineage>
</organism>
<keyword id="KW-0929">Antimicrobial</keyword>
<keyword id="KW-1015">Disulfide bond</keyword>
<keyword id="KW-0295">Fungicide</keyword>
<keyword id="KW-0611">Plant defense</keyword>
<keyword id="KW-1185">Reference proteome</keyword>
<keyword id="KW-0964">Secreted</keyword>
<keyword id="KW-0732">Signal</keyword>